<reference key="1">
    <citation type="journal article" date="2006" name="DNA Res.">
        <title>Genome sequence of the cat pathogen, Chlamydophila felis.</title>
        <authorList>
            <person name="Azuma Y."/>
            <person name="Hirakawa H."/>
            <person name="Yamashita A."/>
            <person name="Cai Y."/>
            <person name="Rahman M.A."/>
            <person name="Suzuki H."/>
            <person name="Mitaku S."/>
            <person name="Toh H."/>
            <person name="Goto S."/>
            <person name="Murakami T."/>
            <person name="Sugi K."/>
            <person name="Hayashi H."/>
            <person name="Fukushi H."/>
            <person name="Hattori M."/>
            <person name="Kuhara S."/>
            <person name="Shirai M."/>
        </authorList>
    </citation>
    <scope>NUCLEOTIDE SEQUENCE [LARGE SCALE GENOMIC DNA]</scope>
    <source>
        <strain>Fe/C-56</strain>
    </source>
</reference>
<proteinExistence type="inferred from homology"/>
<accession>Q254Z5</accession>
<comment type="function">
    <text evidence="1">Catalyzes the reversible conversion of ribose-5-phosphate to ribulose 5-phosphate.</text>
</comment>
<comment type="catalytic activity">
    <reaction evidence="1">
        <text>aldehydo-D-ribose 5-phosphate = D-ribulose 5-phosphate</text>
        <dbReference type="Rhea" id="RHEA:14657"/>
        <dbReference type="ChEBI" id="CHEBI:58121"/>
        <dbReference type="ChEBI" id="CHEBI:58273"/>
        <dbReference type="EC" id="5.3.1.6"/>
    </reaction>
</comment>
<comment type="pathway">
    <text evidence="1">Carbohydrate degradation; pentose phosphate pathway; D-ribose 5-phosphate from D-ribulose 5-phosphate (non-oxidative stage): step 1/1.</text>
</comment>
<comment type="subunit">
    <text evidence="1">Homodimer.</text>
</comment>
<comment type="similarity">
    <text evidence="1">Belongs to the ribose 5-phosphate isomerase family.</text>
</comment>
<organism>
    <name type="scientific">Chlamydia felis (strain Fe/C-56)</name>
    <name type="common">Chlamydophila felis</name>
    <dbReference type="NCBI Taxonomy" id="264202"/>
    <lineage>
        <taxon>Bacteria</taxon>
        <taxon>Pseudomonadati</taxon>
        <taxon>Chlamydiota</taxon>
        <taxon>Chlamydiia</taxon>
        <taxon>Chlamydiales</taxon>
        <taxon>Chlamydiaceae</taxon>
        <taxon>Chlamydia/Chlamydophila group</taxon>
        <taxon>Chlamydia</taxon>
    </lineage>
</organism>
<sequence length="233" mass="25374">MKEDPYLDVKKRLAREAAALVTSGMLVGLGSGSTSREFIKAIAERLAKENLDICAVASSQESYSLASSLGIPLIDDENFTSVDLVVDGADEIDPQLRMIKGGGGAIFREKILLQSSQRRLILADESKSVKVLGKFGLPVEISPYGRSSIIAALEAIGYLGNLRKNSRGGFFITNNGNYIYDIHTPNIYPHPEEDLLKLLQIHGIIEVGFVIANVEVWFGYTNGQICKENTGIV</sequence>
<gene>
    <name evidence="1" type="primary">rpiA</name>
    <name type="ordered locus">CF0371</name>
</gene>
<keyword id="KW-0413">Isomerase</keyword>
<dbReference type="EC" id="5.3.1.6" evidence="1"/>
<dbReference type="EMBL" id="AP006861">
    <property type="protein sequence ID" value="BAE81143.1"/>
    <property type="molecule type" value="Genomic_DNA"/>
</dbReference>
<dbReference type="RefSeq" id="WP_011457923.1">
    <property type="nucleotide sequence ID" value="NC_007899.1"/>
</dbReference>
<dbReference type="SMR" id="Q254Z5"/>
<dbReference type="STRING" id="264202.CF0371"/>
<dbReference type="KEGG" id="cfe:CF0371"/>
<dbReference type="eggNOG" id="COG0120">
    <property type="taxonomic scope" value="Bacteria"/>
</dbReference>
<dbReference type="HOGENOM" id="CLU_056590_1_0_0"/>
<dbReference type="OrthoDB" id="5870696at2"/>
<dbReference type="UniPathway" id="UPA00115">
    <property type="reaction ID" value="UER00412"/>
</dbReference>
<dbReference type="Proteomes" id="UP000001260">
    <property type="component" value="Chromosome"/>
</dbReference>
<dbReference type="GO" id="GO:0005829">
    <property type="term" value="C:cytosol"/>
    <property type="evidence" value="ECO:0007669"/>
    <property type="project" value="TreeGrafter"/>
</dbReference>
<dbReference type="GO" id="GO:0004751">
    <property type="term" value="F:ribose-5-phosphate isomerase activity"/>
    <property type="evidence" value="ECO:0007669"/>
    <property type="project" value="UniProtKB-UniRule"/>
</dbReference>
<dbReference type="GO" id="GO:0006014">
    <property type="term" value="P:D-ribose metabolic process"/>
    <property type="evidence" value="ECO:0007669"/>
    <property type="project" value="TreeGrafter"/>
</dbReference>
<dbReference type="GO" id="GO:0009052">
    <property type="term" value="P:pentose-phosphate shunt, non-oxidative branch"/>
    <property type="evidence" value="ECO:0007669"/>
    <property type="project" value="UniProtKB-UniRule"/>
</dbReference>
<dbReference type="CDD" id="cd01398">
    <property type="entry name" value="RPI_A"/>
    <property type="match status" value="1"/>
</dbReference>
<dbReference type="FunFam" id="3.40.50.1360:FF:000001">
    <property type="entry name" value="Ribose-5-phosphate isomerase A"/>
    <property type="match status" value="1"/>
</dbReference>
<dbReference type="Gene3D" id="3.30.70.260">
    <property type="match status" value="1"/>
</dbReference>
<dbReference type="Gene3D" id="3.40.50.1360">
    <property type="match status" value="1"/>
</dbReference>
<dbReference type="HAMAP" id="MF_00170">
    <property type="entry name" value="Rib_5P_isom_A"/>
    <property type="match status" value="1"/>
</dbReference>
<dbReference type="InterPro" id="IPR037171">
    <property type="entry name" value="NagB/RpiA_transferase-like"/>
</dbReference>
<dbReference type="InterPro" id="IPR020672">
    <property type="entry name" value="Ribose5P_isomerase_typA_subgr"/>
</dbReference>
<dbReference type="InterPro" id="IPR004788">
    <property type="entry name" value="Ribose5P_isomerase_type_A"/>
</dbReference>
<dbReference type="NCBIfam" id="NF001924">
    <property type="entry name" value="PRK00702.1"/>
    <property type="match status" value="1"/>
</dbReference>
<dbReference type="NCBIfam" id="TIGR00021">
    <property type="entry name" value="rpiA"/>
    <property type="match status" value="1"/>
</dbReference>
<dbReference type="PANTHER" id="PTHR11934">
    <property type="entry name" value="RIBOSE-5-PHOSPHATE ISOMERASE"/>
    <property type="match status" value="1"/>
</dbReference>
<dbReference type="PANTHER" id="PTHR11934:SF0">
    <property type="entry name" value="RIBOSE-5-PHOSPHATE ISOMERASE"/>
    <property type="match status" value="1"/>
</dbReference>
<dbReference type="Pfam" id="PF06026">
    <property type="entry name" value="Rib_5-P_isom_A"/>
    <property type="match status" value="1"/>
</dbReference>
<dbReference type="SUPFAM" id="SSF75445">
    <property type="entry name" value="D-ribose-5-phosphate isomerase (RpiA), lid domain"/>
    <property type="match status" value="1"/>
</dbReference>
<dbReference type="SUPFAM" id="SSF100950">
    <property type="entry name" value="NagB/RpiA/CoA transferase-like"/>
    <property type="match status" value="1"/>
</dbReference>
<evidence type="ECO:0000255" key="1">
    <source>
        <dbReference type="HAMAP-Rule" id="MF_00170"/>
    </source>
</evidence>
<feature type="chain" id="PRO_1000016919" description="Ribose-5-phosphate isomerase A">
    <location>
        <begin position="1"/>
        <end position="233"/>
    </location>
</feature>
<feature type="active site" description="Proton acceptor" evidence="1">
    <location>
        <position position="109"/>
    </location>
</feature>
<feature type="binding site" evidence="1">
    <location>
        <begin position="31"/>
        <end position="34"/>
    </location>
    <ligand>
        <name>substrate</name>
    </ligand>
</feature>
<feature type="binding site" evidence="1">
    <location>
        <begin position="87"/>
        <end position="90"/>
    </location>
    <ligand>
        <name>substrate</name>
    </ligand>
</feature>
<feature type="binding site" evidence="1">
    <location>
        <begin position="100"/>
        <end position="103"/>
    </location>
    <ligand>
        <name>substrate</name>
    </ligand>
</feature>
<feature type="binding site" evidence="1">
    <location>
        <position position="127"/>
    </location>
    <ligand>
        <name>substrate</name>
    </ligand>
</feature>
<name>RPIA_CHLFF</name>
<protein>
    <recommendedName>
        <fullName evidence="1">Ribose-5-phosphate isomerase A</fullName>
        <ecNumber evidence="1">5.3.1.6</ecNumber>
    </recommendedName>
    <alternativeName>
        <fullName evidence="1">Phosphoriboisomerase A</fullName>
        <shortName evidence="1">PRI</shortName>
    </alternativeName>
</protein>